<evidence type="ECO:0000255" key="1">
    <source>
        <dbReference type="HAMAP-Rule" id="MF_01321"/>
    </source>
</evidence>
<evidence type="ECO:0000305" key="2"/>
<dbReference type="EC" id="2.7.7.6" evidence="1"/>
<dbReference type="EMBL" id="CP000446">
    <property type="protein sequence ID" value="ABI37273.1"/>
    <property type="status" value="ALT_INIT"/>
    <property type="molecule type" value="Genomic_DNA"/>
</dbReference>
<dbReference type="RefSeq" id="WP_011624801.1">
    <property type="nucleotide sequence ID" value="NC_008321.1"/>
</dbReference>
<dbReference type="SMR" id="Q0HNU4"/>
<dbReference type="KEGG" id="she:Shewmr4_0192"/>
<dbReference type="HOGENOM" id="CLU_000524_4_1_6"/>
<dbReference type="GO" id="GO:0000428">
    <property type="term" value="C:DNA-directed RNA polymerase complex"/>
    <property type="evidence" value="ECO:0007669"/>
    <property type="project" value="UniProtKB-KW"/>
</dbReference>
<dbReference type="GO" id="GO:0003677">
    <property type="term" value="F:DNA binding"/>
    <property type="evidence" value="ECO:0007669"/>
    <property type="project" value="UniProtKB-UniRule"/>
</dbReference>
<dbReference type="GO" id="GO:0003899">
    <property type="term" value="F:DNA-directed RNA polymerase activity"/>
    <property type="evidence" value="ECO:0007669"/>
    <property type="project" value="UniProtKB-UniRule"/>
</dbReference>
<dbReference type="GO" id="GO:0032549">
    <property type="term" value="F:ribonucleoside binding"/>
    <property type="evidence" value="ECO:0007669"/>
    <property type="project" value="InterPro"/>
</dbReference>
<dbReference type="GO" id="GO:0006351">
    <property type="term" value="P:DNA-templated transcription"/>
    <property type="evidence" value="ECO:0007669"/>
    <property type="project" value="UniProtKB-UniRule"/>
</dbReference>
<dbReference type="CDD" id="cd00653">
    <property type="entry name" value="RNA_pol_B_RPB2"/>
    <property type="match status" value="1"/>
</dbReference>
<dbReference type="FunFam" id="2.40.270.10:FF:000003">
    <property type="entry name" value="DNA-directed RNA polymerase subunit beta"/>
    <property type="match status" value="1"/>
</dbReference>
<dbReference type="FunFam" id="2.40.270.10:FF:000004">
    <property type="entry name" value="DNA-directed RNA polymerase subunit beta"/>
    <property type="match status" value="1"/>
</dbReference>
<dbReference type="FunFam" id="2.40.50.100:FF:000006">
    <property type="entry name" value="DNA-directed RNA polymerase subunit beta"/>
    <property type="match status" value="1"/>
</dbReference>
<dbReference type="FunFam" id="2.40.50.150:FF:000001">
    <property type="entry name" value="DNA-directed RNA polymerase subunit beta"/>
    <property type="match status" value="1"/>
</dbReference>
<dbReference type="FunFam" id="3.90.1100.10:FF:000002">
    <property type="entry name" value="DNA-directed RNA polymerase subunit beta"/>
    <property type="match status" value="1"/>
</dbReference>
<dbReference type="FunFam" id="3.90.1110.10:FF:000001">
    <property type="entry name" value="DNA-directed RNA polymerase subunit beta"/>
    <property type="match status" value="1"/>
</dbReference>
<dbReference type="FunFam" id="3.90.1110.10:FF:000004">
    <property type="entry name" value="DNA-directed RNA polymerase subunit beta"/>
    <property type="match status" value="1"/>
</dbReference>
<dbReference type="FunFam" id="3.90.1800.10:FF:000001">
    <property type="entry name" value="DNA-directed RNA polymerase subunit beta"/>
    <property type="match status" value="1"/>
</dbReference>
<dbReference type="Gene3D" id="2.40.50.100">
    <property type="match status" value="1"/>
</dbReference>
<dbReference type="Gene3D" id="2.40.50.150">
    <property type="match status" value="1"/>
</dbReference>
<dbReference type="Gene3D" id="3.90.1100.10">
    <property type="match status" value="2"/>
</dbReference>
<dbReference type="Gene3D" id="2.30.150.10">
    <property type="entry name" value="DNA-directed RNA polymerase, beta subunit, external 1 domain"/>
    <property type="match status" value="1"/>
</dbReference>
<dbReference type="Gene3D" id="2.40.270.10">
    <property type="entry name" value="DNA-directed RNA polymerase, subunit 2, domain 6"/>
    <property type="match status" value="2"/>
</dbReference>
<dbReference type="Gene3D" id="3.90.1800.10">
    <property type="entry name" value="RNA polymerase alpha subunit dimerisation domain"/>
    <property type="match status" value="1"/>
</dbReference>
<dbReference type="Gene3D" id="3.90.1110.10">
    <property type="entry name" value="RNA polymerase Rpb2, domain 2"/>
    <property type="match status" value="2"/>
</dbReference>
<dbReference type="HAMAP" id="MF_01321">
    <property type="entry name" value="RNApol_bact_RpoB"/>
    <property type="match status" value="1"/>
</dbReference>
<dbReference type="InterPro" id="IPR042107">
    <property type="entry name" value="DNA-dir_RNA_pol_bsu_ext_1_sf"/>
</dbReference>
<dbReference type="InterPro" id="IPR019462">
    <property type="entry name" value="DNA-dir_RNA_pol_bsu_external_1"/>
</dbReference>
<dbReference type="InterPro" id="IPR015712">
    <property type="entry name" value="DNA-dir_RNA_pol_su2"/>
</dbReference>
<dbReference type="InterPro" id="IPR007120">
    <property type="entry name" value="DNA-dir_RNAP_su2_dom"/>
</dbReference>
<dbReference type="InterPro" id="IPR037033">
    <property type="entry name" value="DNA-dir_RNAP_su2_hyb_sf"/>
</dbReference>
<dbReference type="InterPro" id="IPR010243">
    <property type="entry name" value="RNA_pol_bsu_bac"/>
</dbReference>
<dbReference type="InterPro" id="IPR007121">
    <property type="entry name" value="RNA_pol_bsu_CS"/>
</dbReference>
<dbReference type="InterPro" id="IPR007644">
    <property type="entry name" value="RNA_pol_bsu_protrusion"/>
</dbReference>
<dbReference type="InterPro" id="IPR007642">
    <property type="entry name" value="RNA_pol_Rpb2_2"/>
</dbReference>
<dbReference type="InterPro" id="IPR037034">
    <property type="entry name" value="RNA_pol_Rpb2_2_sf"/>
</dbReference>
<dbReference type="InterPro" id="IPR007645">
    <property type="entry name" value="RNA_pol_Rpb2_3"/>
</dbReference>
<dbReference type="InterPro" id="IPR007641">
    <property type="entry name" value="RNA_pol_Rpb2_7"/>
</dbReference>
<dbReference type="InterPro" id="IPR014724">
    <property type="entry name" value="RNA_pol_RPB2_OB-fold"/>
</dbReference>
<dbReference type="NCBIfam" id="NF001616">
    <property type="entry name" value="PRK00405.1"/>
    <property type="match status" value="1"/>
</dbReference>
<dbReference type="NCBIfam" id="TIGR02013">
    <property type="entry name" value="rpoB"/>
    <property type="match status" value="1"/>
</dbReference>
<dbReference type="PANTHER" id="PTHR20856">
    <property type="entry name" value="DNA-DIRECTED RNA POLYMERASE I SUBUNIT 2"/>
    <property type="match status" value="1"/>
</dbReference>
<dbReference type="Pfam" id="PF04563">
    <property type="entry name" value="RNA_pol_Rpb2_1"/>
    <property type="match status" value="1"/>
</dbReference>
<dbReference type="Pfam" id="PF04561">
    <property type="entry name" value="RNA_pol_Rpb2_2"/>
    <property type="match status" value="2"/>
</dbReference>
<dbReference type="Pfam" id="PF04565">
    <property type="entry name" value="RNA_pol_Rpb2_3"/>
    <property type="match status" value="1"/>
</dbReference>
<dbReference type="Pfam" id="PF10385">
    <property type="entry name" value="RNA_pol_Rpb2_45"/>
    <property type="match status" value="1"/>
</dbReference>
<dbReference type="Pfam" id="PF00562">
    <property type="entry name" value="RNA_pol_Rpb2_6"/>
    <property type="match status" value="1"/>
</dbReference>
<dbReference type="Pfam" id="PF04560">
    <property type="entry name" value="RNA_pol_Rpb2_7"/>
    <property type="match status" value="1"/>
</dbReference>
<dbReference type="SUPFAM" id="SSF64484">
    <property type="entry name" value="beta and beta-prime subunits of DNA dependent RNA-polymerase"/>
    <property type="match status" value="1"/>
</dbReference>
<dbReference type="PROSITE" id="PS01166">
    <property type="entry name" value="RNA_POL_BETA"/>
    <property type="match status" value="1"/>
</dbReference>
<feature type="chain" id="PRO_0000300401" description="DNA-directed RNA polymerase subunit beta">
    <location>
        <begin position="1"/>
        <end position="1345"/>
    </location>
</feature>
<accession>Q0HNU4</accession>
<keyword id="KW-0240">DNA-directed RNA polymerase</keyword>
<keyword id="KW-0548">Nucleotidyltransferase</keyword>
<keyword id="KW-0804">Transcription</keyword>
<keyword id="KW-0808">Transferase</keyword>
<sequence>MVYSYSEKKRIRKDFGKRPQVLDIPYLLSIQLDSFKKFTDQDPTGERGLEAAFRSVFPIKSFSGNSELQYVSYKLGEPVFDVKECQIRGVTYSAPLRVKLRMVLYDREAAAGTVKDIKEQEVYMGDIPLMTDNGTFVINGTERVIVSQLHRSPGVFFDHDRGKTHSSGKVLYNARIIPYRGSWLDFEFDPKDALFVRIDRRRKLPATIILRALEYSTQEILDLFFERVEFKIKKDTLVMTLVPERLRGETASYDIKDAEGSVLVEAGRRITARHIRQLEKTNTTELEVPVEYIVGKYAAQDYIDPDTGEVLVSANSEISLEDLAKLSLAGIKELSTLYINELDHGAYISDTLRIDPTTNRLEALVEIYRMMRPGEPPTKDAAEALFQNLFFSEERYDLSKVGRMKFNRRLSIPDDEGSGVLSKEDIVAVMKNIIHIRNGFDEVDDIDHLGNRRIRSVGEMAENQFRVGLVRVERAVRERLSLGDLNELMPQDLINAKPISAAVKEFFGSSQLSQFMDQNNPLSEVTHKRRISALGPGGLTRERAGFEVRDVHPTHYGRLCPIETPEGPNIGLINSLASFARTNSYGFLETPYRKVVDGVITDDVEYLSAIEEGRYVIAQANIEVDSQGRMVEEQIACRHKGESTFMRASDIQYMDVSPQQIISVAASLIPFLEHDDANRALMGANMQRQAVPTLKSEKPLVGTGIERTLAVDSGVVVAAKRGGVIDYVDASRIVVKVNEDELRPGEAGIDIYNLTKYTRSNQNTCINQRPCCSVGEPVVRGDVLADGPSTDLGDLALGQNMRIAFMPWNGYNFEDSILISERVAQEDRFTTIHIQELSCIARDTKLGSEEITADIPNVGESALSKLDESGIVYIGAEVKGGDILVGKVTPKGETQLTPEEKLLRAIFGEKASDVKDSSLRVPNSVKGTIIDVQVFTRDGVEKDKRAIEIEEMHIAQARKDLGEEFKILEEGVLSRARNLLLSAGFTEAQIAALPRKDVLVQVIDDETKQTELEQLAEQHEELKADFDKKFEIKRRKITQGDDLAPGVLKIVKVYLAVKRTIQPGDKMAGRHGNKGVISKINPIEDMPYDEQGNPVDIVLNPLGVPSRMNIGQVLEVHLGAAAKGIGNKIAAMLEDQREKGLAEVRSYIKQVYELGDEVQQRVDIDSFTDDELLRLANNLKGGIPVATPAFDGAKEKEIKQMLELAGLPTSGQLKLFDGRTGNEFERPVTVGYMYMLKLNHLVDDKMHARSTGSYSLVTQQPLGGKAQFGGQRFGEMEVWALEAYGAAYTLQEMLTVKSDDVNGRTQMYKNIVDGNHQMQPGMPESFNVLLKEIRSLGINIELDQE</sequence>
<reference key="1">
    <citation type="submission" date="2006-08" db="EMBL/GenBank/DDBJ databases">
        <title>Complete sequence of Shewanella sp. MR-4.</title>
        <authorList>
            <consortium name="US DOE Joint Genome Institute"/>
            <person name="Copeland A."/>
            <person name="Lucas S."/>
            <person name="Lapidus A."/>
            <person name="Barry K."/>
            <person name="Detter J.C."/>
            <person name="Glavina del Rio T."/>
            <person name="Hammon N."/>
            <person name="Israni S."/>
            <person name="Dalin E."/>
            <person name="Tice H."/>
            <person name="Pitluck S."/>
            <person name="Kiss H."/>
            <person name="Brettin T."/>
            <person name="Bruce D."/>
            <person name="Han C."/>
            <person name="Tapia R."/>
            <person name="Gilna P."/>
            <person name="Schmutz J."/>
            <person name="Larimer F."/>
            <person name="Land M."/>
            <person name="Hauser L."/>
            <person name="Kyrpides N."/>
            <person name="Mikhailova N."/>
            <person name="Nealson K."/>
            <person name="Konstantinidis K."/>
            <person name="Klappenbach J."/>
            <person name="Tiedje J."/>
            <person name="Richardson P."/>
        </authorList>
    </citation>
    <scope>NUCLEOTIDE SEQUENCE [LARGE SCALE GENOMIC DNA]</scope>
    <source>
        <strain>MR-4</strain>
    </source>
</reference>
<gene>
    <name evidence="1" type="primary">rpoB</name>
    <name type="ordered locus">Shewmr4_0192</name>
</gene>
<name>RPOB_SHESM</name>
<comment type="function">
    <text evidence="1">DNA-dependent RNA polymerase catalyzes the transcription of DNA into RNA using the four ribonucleoside triphosphates as substrates.</text>
</comment>
<comment type="catalytic activity">
    <reaction evidence="1">
        <text>RNA(n) + a ribonucleoside 5'-triphosphate = RNA(n+1) + diphosphate</text>
        <dbReference type="Rhea" id="RHEA:21248"/>
        <dbReference type="Rhea" id="RHEA-COMP:14527"/>
        <dbReference type="Rhea" id="RHEA-COMP:17342"/>
        <dbReference type="ChEBI" id="CHEBI:33019"/>
        <dbReference type="ChEBI" id="CHEBI:61557"/>
        <dbReference type="ChEBI" id="CHEBI:140395"/>
        <dbReference type="EC" id="2.7.7.6"/>
    </reaction>
</comment>
<comment type="subunit">
    <text evidence="1">The RNAP catalytic core consists of 2 alpha, 1 beta, 1 beta' and 1 omega subunit. When a sigma factor is associated with the core the holoenzyme is formed, which can initiate transcription.</text>
</comment>
<comment type="similarity">
    <text evidence="1">Belongs to the RNA polymerase beta chain family.</text>
</comment>
<comment type="sequence caution" evidence="2">
    <conflict type="erroneous initiation">
        <sequence resource="EMBL-CDS" id="ABI37273"/>
    </conflict>
</comment>
<protein>
    <recommendedName>
        <fullName evidence="1">DNA-directed RNA polymerase subunit beta</fullName>
        <shortName evidence="1">RNAP subunit beta</shortName>
        <ecNumber evidence="1">2.7.7.6</ecNumber>
    </recommendedName>
    <alternativeName>
        <fullName evidence="1">RNA polymerase subunit beta</fullName>
    </alternativeName>
    <alternativeName>
        <fullName evidence="1">Transcriptase subunit beta</fullName>
    </alternativeName>
</protein>
<proteinExistence type="inferred from homology"/>
<organism>
    <name type="scientific">Shewanella sp. (strain MR-4)</name>
    <dbReference type="NCBI Taxonomy" id="60480"/>
    <lineage>
        <taxon>Bacteria</taxon>
        <taxon>Pseudomonadati</taxon>
        <taxon>Pseudomonadota</taxon>
        <taxon>Gammaproteobacteria</taxon>
        <taxon>Alteromonadales</taxon>
        <taxon>Shewanellaceae</taxon>
        <taxon>Shewanella</taxon>
    </lineage>
</organism>